<evidence type="ECO:0000250" key="1"/>
<evidence type="ECO:0000256" key="2">
    <source>
        <dbReference type="SAM" id="MobiDB-lite"/>
    </source>
</evidence>
<evidence type="ECO:0000305" key="3"/>
<gene>
    <name type="primary">HIS2B</name>
    <name type="synonym">H2B1</name>
</gene>
<accession>P93354</accession>
<proteinExistence type="evidence at transcript level"/>
<keyword id="KW-0007">Acetylation</keyword>
<keyword id="KW-0158">Chromosome</keyword>
<keyword id="KW-0238">DNA-binding</keyword>
<keyword id="KW-1017">Isopeptide bond</keyword>
<keyword id="KW-0544">Nucleosome core</keyword>
<keyword id="KW-0539">Nucleus</keyword>
<keyword id="KW-1185">Reference proteome</keyword>
<keyword id="KW-0832">Ubl conjugation</keyword>
<organism>
    <name type="scientific">Nicotiana tabacum</name>
    <name type="common">Common tobacco</name>
    <dbReference type="NCBI Taxonomy" id="4097"/>
    <lineage>
        <taxon>Eukaryota</taxon>
        <taxon>Viridiplantae</taxon>
        <taxon>Streptophyta</taxon>
        <taxon>Embryophyta</taxon>
        <taxon>Tracheophyta</taxon>
        <taxon>Spermatophyta</taxon>
        <taxon>Magnoliopsida</taxon>
        <taxon>eudicotyledons</taxon>
        <taxon>Gunneridae</taxon>
        <taxon>Pentapetalae</taxon>
        <taxon>asterids</taxon>
        <taxon>lamiids</taxon>
        <taxon>Solanales</taxon>
        <taxon>Solanaceae</taxon>
        <taxon>Nicotianoideae</taxon>
        <taxon>Nicotianeae</taxon>
        <taxon>Nicotiana</taxon>
    </lineage>
</organism>
<dbReference type="EMBL" id="Y11208">
    <property type="protein sequence ID" value="CAA72091.1"/>
    <property type="molecule type" value="mRNA"/>
</dbReference>
<dbReference type="PIR" id="T03268">
    <property type="entry name" value="T03268"/>
</dbReference>
<dbReference type="SMR" id="P93354"/>
<dbReference type="STRING" id="4097.P93354"/>
<dbReference type="PaxDb" id="4097-P93354"/>
<dbReference type="Proteomes" id="UP000084051">
    <property type="component" value="Unplaced"/>
</dbReference>
<dbReference type="GO" id="GO:0000786">
    <property type="term" value="C:nucleosome"/>
    <property type="evidence" value="ECO:0007669"/>
    <property type="project" value="UniProtKB-KW"/>
</dbReference>
<dbReference type="GO" id="GO:0005634">
    <property type="term" value="C:nucleus"/>
    <property type="evidence" value="ECO:0007669"/>
    <property type="project" value="UniProtKB-SubCell"/>
</dbReference>
<dbReference type="GO" id="GO:0003677">
    <property type="term" value="F:DNA binding"/>
    <property type="evidence" value="ECO:0000318"/>
    <property type="project" value="GO_Central"/>
</dbReference>
<dbReference type="GO" id="GO:0046982">
    <property type="term" value="F:protein heterodimerization activity"/>
    <property type="evidence" value="ECO:0007669"/>
    <property type="project" value="InterPro"/>
</dbReference>
<dbReference type="GO" id="GO:0030527">
    <property type="term" value="F:structural constituent of chromatin"/>
    <property type="evidence" value="ECO:0007669"/>
    <property type="project" value="InterPro"/>
</dbReference>
<dbReference type="CDD" id="cd22910">
    <property type="entry name" value="HFD_H2B"/>
    <property type="match status" value="1"/>
</dbReference>
<dbReference type="FunFam" id="1.10.20.10:FF:000014">
    <property type="entry name" value="Histone H2B"/>
    <property type="match status" value="1"/>
</dbReference>
<dbReference type="Gene3D" id="1.10.20.10">
    <property type="entry name" value="Histone, subunit A"/>
    <property type="match status" value="1"/>
</dbReference>
<dbReference type="InterPro" id="IPR009072">
    <property type="entry name" value="Histone-fold"/>
</dbReference>
<dbReference type="InterPro" id="IPR007125">
    <property type="entry name" value="Histone_H2A/H2B/H3"/>
</dbReference>
<dbReference type="InterPro" id="IPR000558">
    <property type="entry name" value="Histone_H2B"/>
</dbReference>
<dbReference type="InterPro" id="IPR055333">
    <property type="entry name" value="HISTONE_H2B_site"/>
</dbReference>
<dbReference type="PANTHER" id="PTHR23428">
    <property type="entry name" value="HISTONE H2B"/>
    <property type="match status" value="1"/>
</dbReference>
<dbReference type="Pfam" id="PF00125">
    <property type="entry name" value="Histone"/>
    <property type="match status" value="1"/>
</dbReference>
<dbReference type="PRINTS" id="PR00621">
    <property type="entry name" value="HISTONEH2B"/>
</dbReference>
<dbReference type="SMART" id="SM00427">
    <property type="entry name" value="H2B"/>
    <property type="match status" value="1"/>
</dbReference>
<dbReference type="SUPFAM" id="SSF47113">
    <property type="entry name" value="Histone-fold"/>
    <property type="match status" value="1"/>
</dbReference>
<dbReference type="PROSITE" id="PS00357">
    <property type="entry name" value="HISTONE_H2B"/>
    <property type="match status" value="1"/>
</dbReference>
<reference key="1">
    <citation type="submission" date="1997-02" db="EMBL/GenBank/DDBJ databases">
        <title>Histone H2B protein of Nicotiana tabacum.</title>
        <authorList>
            <person name="Shen W.H."/>
            <person name="Gigot C."/>
        </authorList>
    </citation>
    <scope>NUCLEOTIDE SEQUENCE [MRNA]</scope>
    <source>
        <strain>cv. Bright Yellow 2</strain>
    </source>
</reference>
<protein>
    <recommendedName>
        <fullName>Histone H2B</fullName>
    </recommendedName>
</protein>
<name>H2B_TOBAC</name>
<sequence length="146" mass="15957">MAPRADKKPAEKKPGAEKTPVAEKAPAEKKPRAGKKLPRDAGAAGDKKKKRAEMSVETYKIYIFRVLKHVHPDIGISSKAMGIMNSFINDIFEKLARESSRLAGYNKKPTISSREIQTAVRLVLPGELAKHAVSEGTKAVTKFTSS</sequence>
<feature type="initiator methionine" description="Removed" evidence="1">
    <location>
        <position position="1"/>
    </location>
</feature>
<feature type="chain" id="PRO_0000071921" description="Histone H2B">
    <location>
        <begin position="2"/>
        <end position="146"/>
    </location>
</feature>
<feature type="region of interest" description="Disordered" evidence="2">
    <location>
        <begin position="1"/>
        <end position="52"/>
    </location>
</feature>
<feature type="compositionally biased region" description="Basic and acidic residues" evidence="2">
    <location>
        <begin position="1"/>
        <end position="16"/>
    </location>
</feature>
<feature type="modified residue" description="N6-acetyllysine" evidence="1">
    <location>
        <position position="7"/>
    </location>
</feature>
<feature type="modified residue" description="N6-acetyllysine" evidence="1">
    <location>
        <position position="35"/>
    </location>
</feature>
<feature type="modified residue" description="N6-acetyllysine" evidence="1">
    <location>
        <position position="36"/>
    </location>
</feature>
<feature type="cross-link" description="Glycyl lysine isopeptide (Lys-Gly) (interchain with G-Cter in ubiquitin)" evidence="1">
    <location>
        <position position="142"/>
    </location>
</feature>
<comment type="function">
    <text>Core component of nucleosome. Nucleosomes wrap and compact DNA into chromatin, limiting DNA accessibility to the cellular machineries which require DNA as a template. Histones thereby play a central role in transcription regulation, DNA repair, DNA replication and chromosomal stability. DNA accessibility is regulated via a complex set of post-translational modifications of histones, also called histone code, and nucleosome remodeling.</text>
</comment>
<comment type="subunit">
    <text>The nucleosome is a histone octamer containing two molecules each of H2A, H2B, H3 and H4 assembled in one H3-H4 heterotetramer and two H2A-H2B heterodimers. The octamer wraps approximately 147 bp of DNA.</text>
</comment>
<comment type="subcellular location">
    <subcellularLocation>
        <location>Nucleus</location>
    </subcellularLocation>
    <subcellularLocation>
        <location>Chromosome</location>
    </subcellularLocation>
</comment>
<comment type="PTM">
    <text evidence="1">Can be acetylated to form H2BK6ac, H2BK33ac and H2BK34ac.</text>
</comment>
<comment type="PTM">
    <text evidence="1">Monoubiquitinated to form H2BK143ub1; may give a specific tag for epigenetic transcriptional activation.</text>
</comment>
<comment type="similarity">
    <text evidence="3">Belongs to the histone H2B family.</text>
</comment>
<comment type="caution">
    <text evidence="3">To ensure consistency between histone entries, we follow the 'Brno' nomenclature for histone modifications, with positions referring to those used in the literature for the 'closest' model organism. Due to slight variations in histone sequences between organisms and to the presence of initiator methionine in UniProtKB/Swiss-Prot sequences, the actual positions of modified amino acids in the sequence generally differ. In this entry the following conventions are used: H2BK6ac = acetylated Lys-7; H2BK33ac = acetylated Lys-35; H2BK34ac = acetylated Lys-36; H2BK143ub1 = monoubiquitinated Lys-142.</text>
</comment>